<comment type="function">
    <text evidence="2 6 7">Forms hydroxylysine residues in collagen type IV (By similarity). Required for the secretion of collagen type IV (vkg) from haemocytes, fat body and follicle cells (PubMed:20888931, PubMed:23369713).</text>
</comment>
<comment type="catalytic activity">
    <reaction evidence="1">
        <text>L-lysyl-[collagen] + 2-oxoglutarate + O2 = (5R)-5-hydroxy-L-lysyl-[collagen] + succinate + CO2</text>
        <dbReference type="Rhea" id="RHEA:16569"/>
        <dbReference type="Rhea" id="RHEA-COMP:12751"/>
        <dbReference type="Rhea" id="RHEA-COMP:12752"/>
        <dbReference type="ChEBI" id="CHEBI:15379"/>
        <dbReference type="ChEBI" id="CHEBI:16526"/>
        <dbReference type="ChEBI" id="CHEBI:16810"/>
        <dbReference type="ChEBI" id="CHEBI:29969"/>
        <dbReference type="ChEBI" id="CHEBI:30031"/>
        <dbReference type="ChEBI" id="CHEBI:133442"/>
        <dbReference type="EC" id="1.14.11.4"/>
    </reaction>
</comment>
<comment type="cofactor">
    <cofactor evidence="1">
        <name>L-ascorbate</name>
        <dbReference type="ChEBI" id="CHEBI:38290"/>
    </cofactor>
</comment>
<comment type="cofactor">
    <cofactor evidence="5">
        <name>Fe(2+)</name>
        <dbReference type="ChEBI" id="CHEBI:29033"/>
    </cofactor>
    <text evidence="5">Binds 1 Fe(2+) ion per subunit.</text>
</comment>
<comment type="subcellular location">
    <subcellularLocation>
        <location evidence="6">Endoplasmic reticulum</location>
    </subcellularLocation>
    <subcellularLocation>
        <location evidence="6">Secreted</location>
        <location evidence="6">Extracellular space</location>
    </subcellularLocation>
    <text evidence="6">Detected in the ER of fat body cells and haemocytes. Also detected in small puncta in the extracellular space, particularly in the region surrounding the haemocytes.</text>
</comment>
<comment type="developmental stage">
    <text evidence="6">Expressed throughout embryogenesis (at protein level). First detected at stage 12 in the haemocytes and in the fat body at stage 13 (at protein level). High levels also detected in the anal pads of stage 16 embryos (at protein level).</text>
</comment>
<comment type="disruption phenotype">
    <text evidence="7">RNAi-mediated knockdown in follicle cells results in round eggs. Collagen type IV protein vkg accumulates in the basal cytoplasm of the follicle cells and is likely to cause the distended ER region in the basal cytoplasm.</text>
</comment>
<comment type="sequence caution" evidence="9">
    <conflict type="frameshift">
        <sequence resource="EMBL-CDS" id="AAO41443"/>
    </conflict>
</comment>
<keyword id="KW-0223">Dioxygenase</keyword>
<keyword id="KW-0256">Endoplasmic reticulum</keyword>
<keyword id="KW-0325">Glycoprotein</keyword>
<keyword id="KW-0408">Iron</keyword>
<keyword id="KW-0479">Metal-binding</keyword>
<keyword id="KW-0560">Oxidoreductase</keyword>
<keyword id="KW-1185">Reference proteome</keyword>
<keyword id="KW-0964">Secreted</keyword>
<keyword id="KW-0732">Signal</keyword>
<keyword id="KW-0847">Vitamin C</keyword>
<organism evidence="13">
    <name type="scientific">Drosophila melanogaster</name>
    <name type="common">Fruit fly</name>
    <dbReference type="NCBI Taxonomy" id="7227"/>
    <lineage>
        <taxon>Eukaryota</taxon>
        <taxon>Metazoa</taxon>
        <taxon>Ecdysozoa</taxon>
        <taxon>Arthropoda</taxon>
        <taxon>Hexapoda</taxon>
        <taxon>Insecta</taxon>
        <taxon>Pterygota</taxon>
        <taxon>Neoptera</taxon>
        <taxon>Endopterygota</taxon>
        <taxon>Diptera</taxon>
        <taxon>Brachycera</taxon>
        <taxon>Muscomorpha</taxon>
        <taxon>Ephydroidea</taxon>
        <taxon>Drosophilidae</taxon>
        <taxon>Drosophila</taxon>
        <taxon>Sophophora</taxon>
    </lineage>
</organism>
<protein>
    <recommendedName>
        <fullName evidence="8">Procollagen-lysine,2-oxoglutarate 5-dioxygenase</fullName>
    </recommendedName>
    <alternativeName>
        <fullName evidence="12">Procollagen lysyl hydroxylase</fullName>
        <ecNumber evidence="1">1.14.11.4</ecNumber>
    </alternativeName>
</protein>
<dbReference type="EC" id="1.14.11.4" evidence="1"/>
<dbReference type="EMBL" id="AE014296">
    <property type="protein sequence ID" value="AAF50079.1"/>
    <property type="molecule type" value="Genomic_DNA"/>
</dbReference>
<dbReference type="EMBL" id="AE014296">
    <property type="protein sequence ID" value="AAN11883.1"/>
    <property type="molecule type" value="Genomic_DNA"/>
</dbReference>
<dbReference type="EMBL" id="BT003764">
    <property type="protein sequence ID" value="AAO41443.1"/>
    <property type="status" value="ALT_FRAME"/>
    <property type="molecule type" value="mRNA"/>
</dbReference>
<dbReference type="EMBL" id="AY118559">
    <property type="protein sequence ID" value="AAM49928.1"/>
    <property type="molecule type" value="mRNA"/>
</dbReference>
<dbReference type="RefSeq" id="NP_648451.1">
    <property type="nucleotide sequence ID" value="NM_140194.2"/>
</dbReference>
<dbReference type="RefSeq" id="NP_729687.1">
    <property type="nucleotide sequence ID" value="NM_168452.2"/>
</dbReference>
<dbReference type="SMR" id="Q9VTH0"/>
<dbReference type="FunCoup" id="Q9VTH0">
    <property type="interactions" value="428"/>
</dbReference>
<dbReference type="IntAct" id="Q9VTH0">
    <property type="interactions" value="31"/>
</dbReference>
<dbReference type="STRING" id="7227.FBpp0075917"/>
<dbReference type="GlyCosmos" id="Q9VTH0">
    <property type="glycosylation" value="5 sites, No reported glycans"/>
</dbReference>
<dbReference type="GlyGen" id="Q9VTH0">
    <property type="glycosylation" value="6 sites, 1 O-linked glycan (1 site)"/>
</dbReference>
<dbReference type="PaxDb" id="7227-FBpp0075917"/>
<dbReference type="DNASU" id="39265"/>
<dbReference type="EnsemblMetazoa" id="FBtr0076187">
    <property type="protein sequence ID" value="FBpp0075917"/>
    <property type="gene ID" value="FBgn0036147"/>
</dbReference>
<dbReference type="EnsemblMetazoa" id="FBtr0076188">
    <property type="protein sequence ID" value="FBpp0075918"/>
    <property type="gene ID" value="FBgn0036147"/>
</dbReference>
<dbReference type="GeneID" id="39265"/>
<dbReference type="KEGG" id="dme:Dmel_CG6199"/>
<dbReference type="UCSC" id="CG6199-RA">
    <property type="organism name" value="d. melanogaster"/>
</dbReference>
<dbReference type="AGR" id="FB:FBgn0036147"/>
<dbReference type="CTD" id="39265"/>
<dbReference type="FlyBase" id="FBgn0036147">
    <property type="gene designation" value="Plod"/>
</dbReference>
<dbReference type="VEuPathDB" id="VectorBase:FBgn0036147"/>
<dbReference type="eggNOG" id="KOG1971">
    <property type="taxonomic scope" value="Eukaryota"/>
</dbReference>
<dbReference type="GeneTree" id="ENSGT01030000234558"/>
<dbReference type="HOGENOM" id="CLU_022320_1_0_1"/>
<dbReference type="InParanoid" id="Q9VTH0"/>
<dbReference type="OMA" id="TDVACNH"/>
<dbReference type="OrthoDB" id="69177at2759"/>
<dbReference type="PhylomeDB" id="Q9VTH0"/>
<dbReference type="Reactome" id="R-DME-1650814">
    <property type="pathway name" value="Collagen biosynthesis and modifying enzymes"/>
</dbReference>
<dbReference type="SignaLink" id="Q9VTH0"/>
<dbReference type="BioGRID-ORCS" id="39265">
    <property type="hits" value="0 hits in 3 CRISPR screens"/>
</dbReference>
<dbReference type="GenomeRNAi" id="39265"/>
<dbReference type="PRO" id="PR:Q9VTH0"/>
<dbReference type="Proteomes" id="UP000000803">
    <property type="component" value="Chromosome 3L"/>
</dbReference>
<dbReference type="Bgee" id="FBgn0036147">
    <property type="expression patterns" value="Expressed in interfollicle cell in ovary and 120 other cell types or tissues"/>
</dbReference>
<dbReference type="ExpressionAtlas" id="Q9VTH0">
    <property type="expression patterns" value="baseline and differential"/>
</dbReference>
<dbReference type="GO" id="GO:0062023">
    <property type="term" value="C:collagen-containing extracellular matrix"/>
    <property type="evidence" value="ECO:0000318"/>
    <property type="project" value="GO_Central"/>
</dbReference>
<dbReference type="GO" id="GO:0005783">
    <property type="term" value="C:endoplasmic reticulum"/>
    <property type="evidence" value="ECO:0000314"/>
    <property type="project" value="FlyBase"/>
</dbReference>
<dbReference type="GO" id="GO:0005615">
    <property type="term" value="C:extracellular space"/>
    <property type="evidence" value="ECO:0000314"/>
    <property type="project" value="FlyBase"/>
</dbReference>
<dbReference type="GO" id="GO:0005794">
    <property type="term" value="C:Golgi apparatus"/>
    <property type="evidence" value="ECO:0000318"/>
    <property type="project" value="GO_Central"/>
</dbReference>
<dbReference type="GO" id="GO:0048471">
    <property type="term" value="C:perinuclear region of cytoplasm"/>
    <property type="evidence" value="ECO:0000314"/>
    <property type="project" value="FlyBase"/>
</dbReference>
<dbReference type="GO" id="GO:0005506">
    <property type="term" value="F:iron ion binding"/>
    <property type="evidence" value="ECO:0007669"/>
    <property type="project" value="InterPro"/>
</dbReference>
<dbReference type="GO" id="GO:0031418">
    <property type="term" value="F:L-ascorbic acid binding"/>
    <property type="evidence" value="ECO:0007669"/>
    <property type="project" value="UniProtKB-KW"/>
</dbReference>
<dbReference type="GO" id="GO:0050211">
    <property type="term" value="F:procollagen galactosyltransferase activity"/>
    <property type="evidence" value="ECO:0000250"/>
    <property type="project" value="FlyBase"/>
</dbReference>
<dbReference type="GO" id="GO:0033823">
    <property type="term" value="F:procollagen glucosyltransferase activity"/>
    <property type="evidence" value="ECO:0000250"/>
    <property type="project" value="FlyBase"/>
</dbReference>
<dbReference type="GO" id="GO:0008475">
    <property type="term" value="F:procollagen-lysine 5-dioxygenase activity"/>
    <property type="evidence" value="ECO:0000250"/>
    <property type="project" value="FlyBase"/>
</dbReference>
<dbReference type="GO" id="GO:0030199">
    <property type="term" value="P:collagen fibril organization"/>
    <property type="evidence" value="ECO:0000250"/>
    <property type="project" value="FlyBase"/>
</dbReference>
<dbReference type="GO" id="GO:0006493">
    <property type="term" value="P:protein O-linked glycosylation"/>
    <property type="evidence" value="ECO:0000250"/>
    <property type="project" value="FlyBase"/>
</dbReference>
<dbReference type="FunFam" id="2.60.120.620:FF:000026">
    <property type="entry name" value="Procollagen-lysine,2-oxoglutarate 5-dioxygenase"/>
    <property type="match status" value="1"/>
</dbReference>
<dbReference type="Gene3D" id="2.60.120.620">
    <property type="entry name" value="q2cbj1_9rhob like domain"/>
    <property type="match status" value="1"/>
</dbReference>
<dbReference type="InterPro" id="IPR050757">
    <property type="entry name" value="Collagen_mod_GT25"/>
</dbReference>
<dbReference type="InterPro" id="IPR044861">
    <property type="entry name" value="IPNS-like_FE2OG_OXY"/>
</dbReference>
<dbReference type="InterPro" id="IPR029044">
    <property type="entry name" value="Nucleotide-diphossugar_trans"/>
</dbReference>
<dbReference type="InterPro" id="IPR005123">
    <property type="entry name" value="Oxoglu/Fe-dep_dioxygenase_dom"/>
</dbReference>
<dbReference type="InterPro" id="IPR006620">
    <property type="entry name" value="Pro_4_hyd_alph"/>
</dbReference>
<dbReference type="PANTHER" id="PTHR10730:SF45">
    <property type="entry name" value="PROCOLLAGEN-LYSINE,2-OXOGLUTARATE 5-DIOXYGENASE"/>
    <property type="match status" value="1"/>
</dbReference>
<dbReference type="PANTHER" id="PTHR10730">
    <property type="entry name" value="PROCOLLAGEN-LYSINE,2-OXOGLUTARATE 5-DIOXYGENASE/GLYCOSYLTRANSFERASE 25 FAMILY MEMBER"/>
    <property type="match status" value="1"/>
</dbReference>
<dbReference type="Pfam" id="PF03171">
    <property type="entry name" value="2OG-FeII_Oxy"/>
    <property type="match status" value="1"/>
</dbReference>
<dbReference type="Pfam" id="PF25342">
    <property type="entry name" value="GT_PLOD"/>
    <property type="match status" value="1"/>
</dbReference>
<dbReference type="SMART" id="SM00702">
    <property type="entry name" value="P4Hc"/>
    <property type="match status" value="1"/>
</dbReference>
<dbReference type="SUPFAM" id="SSF53448">
    <property type="entry name" value="Nucleotide-diphospho-sugar transferases"/>
    <property type="match status" value="1"/>
</dbReference>
<dbReference type="PROSITE" id="PS51471">
    <property type="entry name" value="FE2OG_OXY"/>
    <property type="match status" value="1"/>
</dbReference>
<name>PLOD_DROME</name>
<feature type="signal peptide" evidence="3">
    <location>
        <begin position="1"/>
        <end position="21"/>
    </location>
</feature>
<feature type="chain" id="PRO_5015100590" description="Procollagen-lysine,2-oxoglutarate 5-dioxygenase" evidence="3">
    <location>
        <begin position="22"/>
        <end position="721"/>
    </location>
</feature>
<feature type="domain" description="Fe2OG dioxygenase" evidence="5">
    <location>
        <begin position="627"/>
        <end position="721"/>
    </location>
</feature>
<feature type="binding site" evidence="5">
    <location>
        <position position="650"/>
    </location>
    <ligand>
        <name>Fe cation</name>
        <dbReference type="ChEBI" id="CHEBI:24875"/>
    </ligand>
</feature>
<feature type="binding site" evidence="5">
    <location>
        <position position="652"/>
    </location>
    <ligand>
        <name>Fe cation</name>
        <dbReference type="ChEBI" id="CHEBI:24875"/>
    </ligand>
</feature>
<feature type="binding site" evidence="5">
    <location>
        <position position="702"/>
    </location>
    <ligand>
        <name>Fe cation</name>
        <dbReference type="ChEBI" id="CHEBI:24875"/>
    </ligand>
</feature>
<feature type="binding site" evidence="5">
    <location>
        <position position="712"/>
    </location>
    <ligand>
        <name>2-oxoglutarate</name>
        <dbReference type="ChEBI" id="CHEBI:16810"/>
    </ligand>
</feature>
<feature type="glycosylation site" description="N-linked (GlcNAc...) asparagine" evidence="4">
    <location>
        <position position="504"/>
    </location>
</feature>
<feature type="glycosylation site" description="N-linked (GlcNAc...) asparagine" evidence="4">
    <location>
        <position position="530"/>
    </location>
</feature>
<feature type="glycosylation site" description="N-linked (GlcNAc...) asparagine" evidence="4">
    <location>
        <position position="536"/>
    </location>
</feature>
<feature type="glycosylation site" description="N-linked (GlcNAc...) asparagine" evidence="4">
    <location>
        <position position="680"/>
    </location>
</feature>
<feature type="glycosylation site" description="N-linked (GlcNAc...) asparagine" evidence="4">
    <location>
        <position position="709"/>
    </location>
</feature>
<feature type="mutagenesis site" description="Forms round eggs. Intracellular vkg accumulates at the basal surface of follicle cells, and vkg levels are reduced in the basal membrane." evidence="7">
    <original>G</original>
    <variation>D</variation>
    <location>
        <position position="75"/>
    </location>
</feature>
<feature type="sequence conflict" description="In Ref. 3; AAO41443." evidence="9" ref="3">
    <original>N</original>
    <variation>D</variation>
    <location>
        <position position="141"/>
    </location>
</feature>
<accession>Q9VTH0</accession>
<accession>Q86NR6</accession>
<accession>Q8MSV4</accession>
<sequence>MRIQQSALLLLLLAVTSQGDAESNWNDKIKVFTVATEPTDGYTRYIRSARVYDIEVTTLGLGEEWKGGDMQKPGGGFKLNLLREAIAPYKNEPETIILFTDSYDVIITTTLDEIFEKFKESGAKILFSAEKYCWPDKSLANDYPEVEGKASRFLNSGAFIGYAPQVFALLVDPIEDTADDQLYFTKIFLDETKRAKLGLKLDVQSRLFQNLHGAKNDVKLKVDLESNQGVLQNVDFMTTPSIIHGNGLSKVDLNAYGNYLARTFNGVCLLCQENLLDLEETNLPVISLALMVTQPVPFFDQFLEGIESLNYPKEKLHLLIYSNVAFHDDDIKSFVNKHAKEYATAKFALSTDELDERQGRQLALDKARLHQSDYIFFVDADAHIDDGEVLRELLRLNKQFVAPIFSKHKELWSNFWGALSEGGYYARSHDYVDIVKRELIGMFNVPHVTSIYLVKKTAFDAISFKHKEFDPDMAMCESLRNAGIFMYASNLRIFGHLVNADDFNTTVTRPDFYTLFSNEIDWTEKYIHPNYSLQLNESNKIQQPCPDVYWFQIVSDAFCDDLVAIMEAHNGWSDGSNNDNRLEGGYEAVPTRDIHMKQVGLERLYLKFLQMFVRPLQERAFTGYFHNPPRALMNFMVRYRPDEQPSLRPHHDSSTYTINIAMNRAGIDYQGGGCRFIRYNCSVTDTKKGWMLMHPGRLTHYHEGLLVTNGTRYIMISFIDP</sequence>
<gene>
    <name evidence="8 12" type="primary">Plod</name>
    <name evidence="12" type="ORF">CG6199</name>
</gene>
<evidence type="ECO:0000250" key="1">
    <source>
        <dbReference type="UniProtKB" id="Q02809"/>
    </source>
</evidence>
<evidence type="ECO:0000250" key="2">
    <source>
        <dbReference type="UniProtKB" id="Q20679"/>
    </source>
</evidence>
<evidence type="ECO:0000255" key="3"/>
<evidence type="ECO:0000255" key="4">
    <source>
        <dbReference type="PROSITE-ProRule" id="PRU00498"/>
    </source>
</evidence>
<evidence type="ECO:0000255" key="5">
    <source>
        <dbReference type="PROSITE-ProRule" id="PRU00805"/>
    </source>
</evidence>
<evidence type="ECO:0000269" key="6">
    <source>
    </source>
</evidence>
<evidence type="ECO:0000269" key="7">
    <source>
    </source>
</evidence>
<evidence type="ECO:0000303" key="8">
    <source>
    </source>
</evidence>
<evidence type="ECO:0000305" key="9"/>
<evidence type="ECO:0000312" key="10">
    <source>
        <dbReference type="EMBL" id="AAM49928.1"/>
    </source>
</evidence>
<evidence type="ECO:0000312" key="11">
    <source>
        <dbReference type="EMBL" id="AAO41443.1"/>
    </source>
</evidence>
<evidence type="ECO:0000312" key="12">
    <source>
        <dbReference type="FlyBase" id="FBgn0036147"/>
    </source>
</evidence>
<evidence type="ECO:0000312" key="13">
    <source>
        <dbReference type="Proteomes" id="UP000000803"/>
    </source>
</evidence>
<proteinExistence type="evidence at protein level"/>
<reference evidence="13" key="1">
    <citation type="journal article" date="2000" name="Science">
        <title>The genome sequence of Drosophila melanogaster.</title>
        <authorList>
            <person name="Adams M.D."/>
            <person name="Celniker S.E."/>
            <person name="Holt R.A."/>
            <person name="Evans C.A."/>
            <person name="Gocayne J.D."/>
            <person name="Amanatides P.G."/>
            <person name="Scherer S.E."/>
            <person name="Li P.W."/>
            <person name="Hoskins R.A."/>
            <person name="Galle R.F."/>
            <person name="George R.A."/>
            <person name="Lewis S.E."/>
            <person name="Richards S."/>
            <person name="Ashburner M."/>
            <person name="Henderson S.N."/>
            <person name="Sutton G.G."/>
            <person name="Wortman J.R."/>
            <person name="Yandell M.D."/>
            <person name="Zhang Q."/>
            <person name="Chen L.X."/>
            <person name="Brandon R.C."/>
            <person name="Rogers Y.-H.C."/>
            <person name="Blazej R.G."/>
            <person name="Champe M."/>
            <person name="Pfeiffer B.D."/>
            <person name="Wan K.H."/>
            <person name="Doyle C."/>
            <person name="Baxter E.G."/>
            <person name="Helt G."/>
            <person name="Nelson C.R."/>
            <person name="Miklos G.L.G."/>
            <person name="Abril J.F."/>
            <person name="Agbayani A."/>
            <person name="An H.-J."/>
            <person name="Andrews-Pfannkoch C."/>
            <person name="Baldwin D."/>
            <person name="Ballew R.M."/>
            <person name="Basu A."/>
            <person name="Baxendale J."/>
            <person name="Bayraktaroglu L."/>
            <person name="Beasley E.M."/>
            <person name="Beeson K.Y."/>
            <person name="Benos P.V."/>
            <person name="Berman B.P."/>
            <person name="Bhandari D."/>
            <person name="Bolshakov S."/>
            <person name="Borkova D."/>
            <person name="Botchan M.R."/>
            <person name="Bouck J."/>
            <person name="Brokstein P."/>
            <person name="Brottier P."/>
            <person name="Burtis K.C."/>
            <person name="Busam D.A."/>
            <person name="Butler H."/>
            <person name="Cadieu E."/>
            <person name="Center A."/>
            <person name="Chandra I."/>
            <person name="Cherry J.M."/>
            <person name="Cawley S."/>
            <person name="Dahlke C."/>
            <person name="Davenport L.B."/>
            <person name="Davies P."/>
            <person name="de Pablos B."/>
            <person name="Delcher A."/>
            <person name="Deng Z."/>
            <person name="Mays A.D."/>
            <person name="Dew I."/>
            <person name="Dietz S.M."/>
            <person name="Dodson K."/>
            <person name="Doup L.E."/>
            <person name="Downes M."/>
            <person name="Dugan-Rocha S."/>
            <person name="Dunkov B.C."/>
            <person name="Dunn P."/>
            <person name="Durbin K.J."/>
            <person name="Evangelista C.C."/>
            <person name="Ferraz C."/>
            <person name="Ferriera S."/>
            <person name="Fleischmann W."/>
            <person name="Fosler C."/>
            <person name="Gabrielian A.E."/>
            <person name="Garg N.S."/>
            <person name="Gelbart W.M."/>
            <person name="Glasser K."/>
            <person name="Glodek A."/>
            <person name="Gong F."/>
            <person name="Gorrell J.H."/>
            <person name="Gu Z."/>
            <person name="Guan P."/>
            <person name="Harris M."/>
            <person name="Harris N.L."/>
            <person name="Harvey D.A."/>
            <person name="Heiman T.J."/>
            <person name="Hernandez J.R."/>
            <person name="Houck J."/>
            <person name="Hostin D."/>
            <person name="Houston K.A."/>
            <person name="Howland T.J."/>
            <person name="Wei M.-H."/>
            <person name="Ibegwam C."/>
            <person name="Jalali M."/>
            <person name="Kalush F."/>
            <person name="Karpen G.H."/>
            <person name="Ke Z."/>
            <person name="Kennison J.A."/>
            <person name="Ketchum K.A."/>
            <person name="Kimmel B.E."/>
            <person name="Kodira C.D."/>
            <person name="Kraft C.L."/>
            <person name="Kravitz S."/>
            <person name="Kulp D."/>
            <person name="Lai Z."/>
            <person name="Lasko P."/>
            <person name="Lei Y."/>
            <person name="Levitsky A.A."/>
            <person name="Li J.H."/>
            <person name="Li Z."/>
            <person name="Liang Y."/>
            <person name="Lin X."/>
            <person name="Liu X."/>
            <person name="Mattei B."/>
            <person name="McIntosh T.C."/>
            <person name="McLeod M.P."/>
            <person name="McPherson D."/>
            <person name="Merkulov G."/>
            <person name="Milshina N.V."/>
            <person name="Mobarry C."/>
            <person name="Morris J."/>
            <person name="Moshrefi A."/>
            <person name="Mount S.M."/>
            <person name="Moy M."/>
            <person name="Murphy B."/>
            <person name="Murphy L."/>
            <person name="Muzny D.M."/>
            <person name="Nelson D.L."/>
            <person name="Nelson D.R."/>
            <person name="Nelson K.A."/>
            <person name="Nixon K."/>
            <person name="Nusskern D.R."/>
            <person name="Pacleb J.M."/>
            <person name="Palazzolo M."/>
            <person name="Pittman G.S."/>
            <person name="Pan S."/>
            <person name="Pollard J."/>
            <person name="Puri V."/>
            <person name="Reese M.G."/>
            <person name="Reinert K."/>
            <person name="Remington K."/>
            <person name="Saunders R.D.C."/>
            <person name="Scheeler F."/>
            <person name="Shen H."/>
            <person name="Shue B.C."/>
            <person name="Siden-Kiamos I."/>
            <person name="Simpson M."/>
            <person name="Skupski M.P."/>
            <person name="Smith T.J."/>
            <person name="Spier E."/>
            <person name="Spradling A.C."/>
            <person name="Stapleton M."/>
            <person name="Strong R."/>
            <person name="Sun E."/>
            <person name="Svirskas R."/>
            <person name="Tector C."/>
            <person name="Turner R."/>
            <person name="Venter E."/>
            <person name="Wang A.H."/>
            <person name="Wang X."/>
            <person name="Wang Z.-Y."/>
            <person name="Wassarman D.A."/>
            <person name="Weinstock G.M."/>
            <person name="Weissenbach J."/>
            <person name="Williams S.M."/>
            <person name="Woodage T."/>
            <person name="Worley K.C."/>
            <person name="Wu D."/>
            <person name="Yang S."/>
            <person name="Yao Q.A."/>
            <person name="Ye J."/>
            <person name="Yeh R.-F."/>
            <person name="Zaveri J.S."/>
            <person name="Zhan M."/>
            <person name="Zhang G."/>
            <person name="Zhao Q."/>
            <person name="Zheng L."/>
            <person name="Zheng X.H."/>
            <person name="Zhong F.N."/>
            <person name="Zhong W."/>
            <person name="Zhou X."/>
            <person name="Zhu S.C."/>
            <person name="Zhu X."/>
            <person name="Smith H.O."/>
            <person name="Gibbs R.A."/>
            <person name="Myers E.W."/>
            <person name="Rubin G.M."/>
            <person name="Venter J.C."/>
        </authorList>
    </citation>
    <scope>NUCLEOTIDE SEQUENCE [LARGE SCALE GENOMIC DNA]</scope>
    <source>
        <strain evidence="13">Berkeley</strain>
    </source>
</reference>
<reference evidence="13" key="2">
    <citation type="journal article" date="2002" name="Genome Biol.">
        <title>Annotation of the Drosophila melanogaster euchromatic genome: a systematic review.</title>
        <authorList>
            <person name="Misra S."/>
            <person name="Crosby M.A."/>
            <person name="Mungall C.J."/>
            <person name="Matthews B.B."/>
            <person name="Campbell K.S."/>
            <person name="Hradecky P."/>
            <person name="Huang Y."/>
            <person name="Kaminker J.S."/>
            <person name="Millburn G.H."/>
            <person name="Prochnik S.E."/>
            <person name="Smith C.D."/>
            <person name="Tupy J.L."/>
            <person name="Whitfield E.J."/>
            <person name="Bayraktaroglu L."/>
            <person name="Berman B.P."/>
            <person name="Bettencourt B.R."/>
            <person name="Celniker S.E."/>
            <person name="de Grey A.D.N.J."/>
            <person name="Drysdale R.A."/>
            <person name="Harris N.L."/>
            <person name="Richter J."/>
            <person name="Russo S."/>
            <person name="Schroeder A.J."/>
            <person name="Shu S.Q."/>
            <person name="Stapleton M."/>
            <person name="Yamada C."/>
            <person name="Ashburner M."/>
            <person name="Gelbart W.M."/>
            <person name="Rubin G.M."/>
            <person name="Lewis S.E."/>
        </authorList>
    </citation>
    <scope>GENOME REANNOTATION</scope>
    <source>
        <strain evidence="13">Berkeley</strain>
    </source>
</reference>
<reference evidence="11" key="3">
    <citation type="submission" date="2003-02" db="EMBL/GenBank/DDBJ databases">
        <authorList>
            <person name="Stapleton M."/>
            <person name="Brokstein P."/>
            <person name="Hong L."/>
            <person name="Agbayani A."/>
            <person name="Carlson J."/>
            <person name="Champe M."/>
            <person name="Chavez C."/>
            <person name="Dorsett V."/>
            <person name="Dresnek D."/>
            <person name="Farfan D."/>
            <person name="Frise E."/>
            <person name="George R."/>
            <person name="Gonzalez M."/>
            <person name="Guarin H."/>
            <person name="Kronmiller B."/>
            <person name="Li P."/>
            <person name="Liao G."/>
            <person name="Miranda A."/>
            <person name="Mungall C.J."/>
            <person name="Nunoo J."/>
            <person name="Pacleb J."/>
            <person name="Paragas V."/>
            <person name="Park S."/>
            <person name="Patel S."/>
            <person name="Phouanenavong S."/>
            <person name="Wan K."/>
            <person name="Yu C."/>
            <person name="Lewis S.E."/>
            <person name="Rubin G.M."/>
            <person name="Celniker S."/>
        </authorList>
    </citation>
    <scope>NUCLEOTIDE SEQUENCE [LARGE SCALE MRNA]</scope>
    <source>
        <strain evidence="11">Berkeley</strain>
        <tissue evidence="11">Embryo</tissue>
    </source>
</reference>
<reference evidence="10" key="4">
    <citation type="journal article" date="2002" name="Genome Biol.">
        <title>A Drosophila full-length cDNA resource.</title>
        <authorList>
            <person name="Stapleton M."/>
            <person name="Carlson J.W."/>
            <person name="Brokstein P."/>
            <person name="Yu C."/>
            <person name="Champe M."/>
            <person name="George R.A."/>
            <person name="Guarin H."/>
            <person name="Kronmiller B."/>
            <person name="Pacleb J.M."/>
            <person name="Park S."/>
            <person name="Wan K.H."/>
            <person name="Rubin G.M."/>
            <person name="Celniker S.E."/>
        </authorList>
    </citation>
    <scope>NUCLEOTIDE SEQUENCE [LARGE SCALE MRNA] OF 440-721</scope>
    <source>
        <strain>Berkeley</strain>
        <tissue>Embryo</tissue>
    </source>
</reference>
<reference evidence="9" key="5">
    <citation type="journal article" date="2011" name="Gene Expr. Patterns">
        <title>Characterisation of the Drosophila procollagen lysyl hydroxylase, dPlod.</title>
        <authorList>
            <person name="Bunt S."/>
            <person name="Denholm B."/>
            <person name="Skaer H."/>
        </authorList>
    </citation>
    <scope>FUNCTION</scope>
    <scope>SUBCELLULAR LOCATION</scope>
    <scope>DEVELOPMENTAL STAGE</scope>
</reference>
<reference evidence="9" key="6">
    <citation type="journal article" date="2013" name="Dev. Cell">
        <title>A Rab10-dependent mechanism for polarized basement membrane secretion during organ morphogenesis.</title>
        <authorList>
            <person name="Lerner D.W."/>
            <person name="McCoy D."/>
            <person name="Isabella A.J."/>
            <person name="Mahowald A.P."/>
            <person name="Gerlach G.F."/>
            <person name="Chaudhry T.A."/>
            <person name="Horne-Badovinac S."/>
        </authorList>
    </citation>
    <scope>FUNCTION</scope>
    <scope>DISRUPTION PHENOTYPE</scope>
    <scope>MUTAGENESIS OF GLY-75</scope>
</reference>